<dbReference type="EC" id="2.3.1.165" evidence="9"/>
<dbReference type="EMBL" id="MF989999">
    <property type="protein sequence ID" value="AVK70100.1"/>
    <property type="molecule type" value="Genomic_DNA"/>
</dbReference>
<dbReference type="EMBL" id="MH388470">
    <property type="protein sequence ID" value="QBC75448.1"/>
    <property type="molecule type" value="Genomic_DNA"/>
</dbReference>
<dbReference type="SMR" id="A0A2P1DP91"/>
<dbReference type="UniPathway" id="UPA00213"/>
<dbReference type="GO" id="GO:0004315">
    <property type="term" value="F:3-oxoacyl-[acyl-carrier-protein] synthase activity"/>
    <property type="evidence" value="ECO:0007669"/>
    <property type="project" value="InterPro"/>
</dbReference>
<dbReference type="GO" id="GO:0004312">
    <property type="term" value="F:fatty acid synthase activity"/>
    <property type="evidence" value="ECO:0007669"/>
    <property type="project" value="TreeGrafter"/>
</dbReference>
<dbReference type="GO" id="GO:0008168">
    <property type="term" value="F:methyltransferase activity"/>
    <property type="evidence" value="ECO:0007669"/>
    <property type="project" value="UniProtKB-KW"/>
</dbReference>
<dbReference type="GO" id="GO:0031177">
    <property type="term" value="F:phosphopantetheine binding"/>
    <property type="evidence" value="ECO:0007669"/>
    <property type="project" value="InterPro"/>
</dbReference>
<dbReference type="GO" id="GO:0006633">
    <property type="term" value="P:fatty acid biosynthetic process"/>
    <property type="evidence" value="ECO:0007669"/>
    <property type="project" value="InterPro"/>
</dbReference>
<dbReference type="GO" id="GO:1901336">
    <property type="term" value="P:lactone biosynthetic process"/>
    <property type="evidence" value="ECO:0007669"/>
    <property type="project" value="UniProtKB-ARBA"/>
</dbReference>
<dbReference type="GO" id="GO:0032259">
    <property type="term" value="P:methylation"/>
    <property type="evidence" value="ECO:0007669"/>
    <property type="project" value="UniProtKB-KW"/>
</dbReference>
<dbReference type="GO" id="GO:0030639">
    <property type="term" value="P:polyketide biosynthetic process"/>
    <property type="evidence" value="ECO:0007669"/>
    <property type="project" value="UniProtKB-ARBA"/>
</dbReference>
<dbReference type="GO" id="GO:0016114">
    <property type="term" value="P:terpenoid biosynthetic process"/>
    <property type="evidence" value="ECO:0007669"/>
    <property type="project" value="UniProtKB-UniPathway"/>
</dbReference>
<dbReference type="CDD" id="cd05274">
    <property type="entry name" value="KR_FAS_SDR_x"/>
    <property type="match status" value="1"/>
</dbReference>
<dbReference type="CDD" id="cd00833">
    <property type="entry name" value="PKS"/>
    <property type="match status" value="1"/>
</dbReference>
<dbReference type="Gene3D" id="3.40.47.10">
    <property type="match status" value="1"/>
</dbReference>
<dbReference type="Gene3D" id="1.10.1200.10">
    <property type="entry name" value="ACP-like"/>
    <property type="match status" value="1"/>
</dbReference>
<dbReference type="Gene3D" id="3.30.70.250">
    <property type="entry name" value="Malonyl-CoA ACP transacylase, ACP-binding"/>
    <property type="match status" value="1"/>
</dbReference>
<dbReference type="Gene3D" id="3.40.366.10">
    <property type="entry name" value="Malonyl-Coenzyme A Acyl Carrier Protein, domain 2"/>
    <property type="match status" value="1"/>
</dbReference>
<dbReference type="Gene3D" id="3.40.50.720">
    <property type="entry name" value="NAD(P)-binding Rossmann-like Domain"/>
    <property type="match status" value="1"/>
</dbReference>
<dbReference type="Gene3D" id="3.10.129.110">
    <property type="entry name" value="Polyketide synthase dehydratase"/>
    <property type="match status" value="1"/>
</dbReference>
<dbReference type="InterPro" id="IPR001227">
    <property type="entry name" value="Ac_transferase_dom_sf"/>
</dbReference>
<dbReference type="InterPro" id="IPR036736">
    <property type="entry name" value="ACP-like_sf"/>
</dbReference>
<dbReference type="InterPro" id="IPR014043">
    <property type="entry name" value="Acyl_transferase_dom"/>
</dbReference>
<dbReference type="InterPro" id="IPR016035">
    <property type="entry name" value="Acyl_Trfase/lysoPLipase"/>
</dbReference>
<dbReference type="InterPro" id="IPR018201">
    <property type="entry name" value="Ketoacyl_synth_AS"/>
</dbReference>
<dbReference type="InterPro" id="IPR014031">
    <property type="entry name" value="Ketoacyl_synth_C"/>
</dbReference>
<dbReference type="InterPro" id="IPR014030">
    <property type="entry name" value="Ketoacyl_synth_N"/>
</dbReference>
<dbReference type="InterPro" id="IPR016036">
    <property type="entry name" value="Malonyl_transacylase_ACP-bd"/>
</dbReference>
<dbReference type="InterPro" id="IPR036291">
    <property type="entry name" value="NAD(P)-bd_dom_sf"/>
</dbReference>
<dbReference type="InterPro" id="IPR020841">
    <property type="entry name" value="PKS_Beta-ketoAc_synthase_dom"/>
</dbReference>
<dbReference type="InterPro" id="IPR042104">
    <property type="entry name" value="PKS_dehydratase_sf"/>
</dbReference>
<dbReference type="InterPro" id="IPR020807">
    <property type="entry name" value="PKS_DH"/>
</dbReference>
<dbReference type="InterPro" id="IPR049552">
    <property type="entry name" value="PKS_DH_N"/>
</dbReference>
<dbReference type="InterPro" id="IPR013968">
    <property type="entry name" value="PKS_KR"/>
</dbReference>
<dbReference type="InterPro" id="IPR049900">
    <property type="entry name" value="PKS_mFAS_DH"/>
</dbReference>
<dbReference type="InterPro" id="IPR050091">
    <property type="entry name" value="PKS_NRPS_Biosynth_Enz"/>
</dbReference>
<dbReference type="InterPro" id="IPR020806">
    <property type="entry name" value="PKS_PP-bd"/>
</dbReference>
<dbReference type="InterPro" id="IPR009081">
    <property type="entry name" value="PP-bd_ACP"/>
</dbReference>
<dbReference type="InterPro" id="IPR016039">
    <property type="entry name" value="Thiolase-like"/>
</dbReference>
<dbReference type="PANTHER" id="PTHR43775">
    <property type="entry name" value="FATTY ACID SYNTHASE"/>
    <property type="match status" value="1"/>
</dbReference>
<dbReference type="PANTHER" id="PTHR43775:SF22">
    <property type="entry name" value="SYNTHASE, PUTATIVE (JCVI)-RELATED"/>
    <property type="match status" value="1"/>
</dbReference>
<dbReference type="Pfam" id="PF00698">
    <property type="entry name" value="Acyl_transf_1"/>
    <property type="match status" value="1"/>
</dbReference>
<dbReference type="Pfam" id="PF00109">
    <property type="entry name" value="ketoacyl-synt"/>
    <property type="match status" value="1"/>
</dbReference>
<dbReference type="Pfam" id="PF02801">
    <property type="entry name" value="Ketoacyl-synt_C"/>
    <property type="match status" value="1"/>
</dbReference>
<dbReference type="Pfam" id="PF08659">
    <property type="entry name" value="KR"/>
    <property type="match status" value="1"/>
</dbReference>
<dbReference type="Pfam" id="PF21089">
    <property type="entry name" value="PKS_DH_N"/>
    <property type="match status" value="1"/>
</dbReference>
<dbReference type="Pfam" id="PF00550">
    <property type="entry name" value="PP-binding"/>
    <property type="match status" value="1"/>
</dbReference>
<dbReference type="SMART" id="SM00827">
    <property type="entry name" value="PKS_AT"/>
    <property type="match status" value="1"/>
</dbReference>
<dbReference type="SMART" id="SM00826">
    <property type="entry name" value="PKS_DH"/>
    <property type="match status" value="1"/>
</dbReference>
<dbReference type="SMART" id="SM00822">
    <property type="entry name" value="PKS_KR"/>
    <property type="match status" value="1"/>
</dbReference>
<dbReference type="SMART" id="SM00825">
    <property type="entry name" value="PKS_KS"/>
    <property type="match status" value="1"/>
</dbReference>
<dbReference type="SMART" id="SM00823">
    <property type="entry name" value="PKS_PP"/>
    <property type="match status" value="1"/>
</dbReference>
<dbReference type="SMART" id="SM01294">
    <property type="entry name" value="PKS_PP_betabranch"/>
    <property type="match status" value="1"/>
</dbReference>
<dbReference type="SUPFAM" id="SSF47336">
    <property type="entry name" value="ACP-like"/>
    <property type="match status" value="1"/>
</dbReference>
<dbReference type="SUPFAM" id="SSF52151">
    <property type="entry name" value="FabD/lysophospholipase-like"/>
    <property type="match status" value="1"/>
</dbReference>
<dbReference type="SUPFAM" id="SSF51735">
    <property type="entry name" value="NAD(P)-binding Rossmann-fold domains"/>
    <property type="match status" value="2"/>
</dbReference>
<dbReference type="SUPFAM" id="SSF55048">
    <property type="entry name" value="Probable ACP-binding domain of malonyl-CoA ACP transacylase"/>
    <property type="match status" value="1"/>
</dbReference>
<dbReference type="SUPFAM" id="SSF53901">
    <property type="entry name" value="Thiolase-like"/>
    <property type="match status" value="1"/>
</dbReference>
<dbReference type="PROSITE" id="PS50075">
    <property type="entry name" value="CARRIER"/>
    <property type="match status" value="1"/>
</dbReference>
<dbReference type="PROSITE" id="PS00606">
    <property type="entry name" value="KS3_1"/>
    <property type="match status" value="1"/>
</dbReference>
<dbReference type="PROSITE" id="PS52004">
    <property type="entry name" value="KS3_2"/>
    <property type="match status" value="1"/>
</dbReference>
<dbReference type="PROSITE" id="PS52019">
    <property type="entry name" value="PKS_MFAS_DH"/>
    <property type="match status" value="1"/>
</dbReference>
<gene>
    <name evidence="10" type="primary">macA</name>
</gene>
<proteinExistence type="evidence at protein level"/>
<protein>
    <recommendedName>
        <fullName evidence="10">6-methylsalicylic acid synthase</fullName>
        <shortName evidence="10">6MSAS</shortName>
        <ecNumber evidence="9">2.3.1.165</ecNumber>
    </recommendedName>
    <alternativeName>
        <fullName evidence="10">Macrophorins biosynthesis cluster protein A</fullName>
    </alternativeName>
    <alternativeName>
        <fullName evidence="10">Non-reducing polyketide synthase macA</fullName>
    </alternativeName>
</protein>
<organism>
    <name type="scientific">Penicillium terrestre</name>
    <dbReference type="NCBI Taxonomy" id="374132"/>
    <lineage>
        <taxon>Eukaryota</taxon>
        <taxon>Fungi</taxon>
        <taxon>Dikarya</taxon>
        <taxon>Ascomycota</taxon>
        <taxon>Pezizomycotina</taxon>
        <taxon>Eurotiomycetes</taxon>
        <taxon>Eurotiomycetidae</taxon>
        <taxon>Eurotiales</taxon>
        <taxon>Aspergillaceae</taxon>
        <taxon>Penicillium</taxon>
    </lineage>
</organism>
<name>MACA_PENTR</name>
<sequence length="1783" mass="190836">MITSTSSTEVLTPANGSDDSKGTTTPATSSGDPEMHDDLLRNDTHDDVAIIGMACRVPGDVNSPSALWQFLLEKGDASGDMPTWRWDPYRQRHPRNAAVLAETTAKGYFLNDIDQFDAAFFAISPREAEQMDPQQRIALEVAWEALENAGISPSRLAGSNTSVYMGVNSDDYAKLVLEDLPDVGAHMGVGTAYCGIPSRISYLLDLMGPSVAMDAACASSLVAVHHARQAIRAGETDLAIAGGVNALLGPGLTRVLDEAGAISADGKCRSFDDSASGYGRGEGAGVVILKRLDKALTDGDQVLAVLKGSAVASDGKTLGIMAPNAQAQLLVAQKALKEAKVTSDSINYIEAHATSTSLGDPTETNALAEVYGVGSGRHPSDPCYIGSIKPNIGHLEAGAGVMGLIKAVLVLRYGEVPPQANLQTLNSKIAWKENLLRPARELVTLPRGALSRPLRAAIASYGYSGTVSHAIIEAFAGQSLFAERLAQIPDSDAAPALLLLSVPQANRISTTAAGLSRWLRDMDGAVSLATVASTLSQRRMHHRFRHAIVADSVANAIATLDDLAKDVPSRWAISDRIGSEAGKGAVWVFSGHGAQWPDMGRELFHSSPAFGEVVRNLEPIIQAELGFSAIETLHAGCPDRTDLIQAMTFLMHLGIAAVLEAESGPPTAVVGHSLGEAAAAVVSGALTWHEAALVVCRRARLYREFMGQGAMALVRLSASEARARIATHPGASVAIETSPTACVVSGTVDALQRLSEQWLEEGVEVRAVATDVPFHTPLLEKLAGPLRGALKNELHPQVPHRALYSTSLLDPRSDLLRDAEYWVMNMIQPVLLQSTVAALVDDGFRAFVEVASHPIITHSIVETISEQTTDRFIATPTMVRKQPALKSILAAVGRLHCFGCAVKPTDLDPTVPWSSSVPGTIWHHQSFYRAVSGMTAAQLASTHKPAANDLLGTRTALWGTEEVLYQTRLEEDNRPFPGRHPLHGSEIVPAAVLLRTFLRALSPRSVEEVSLQVPVVVSPAREIQIRHNTRNITITSRLEESTSNEHNSWLVNTTATVGADATPSVSHVDIAEVAKRLPQKLSDSFSIDYLASVGVSAMGFPWRVAHHVASDNEMLARVHANPDSLPGMDDLLTSVMDAATSIASTLWHSKPRLRMPTAVRRVVAVGVATPQVVYIHCTKAQSSVDEADVIISSEEGMVLMEIQGMAFAGVEGESLSRKSTSGLVHQISWPPAALAEEPLEFAHIAFLTADATKAQVGTYQRQIEGRGISTSIHERASDLPLTTHSSMAVVYLPQFTDRIFDTATRSCNDLVTAAQVILSSSDKPTIRLFAVTSESNLGHSALTGLGRILHTEHPEIWGSLIDLEDPSVFPLMAMRYVRNADVIKIEDGVPRTARLRPLRPAPPHSTAGPATLTFSPASTYLITGGLGSLGISVAQWMVTQGARRILLLSRRSLPPRSIWTASHKPGTQFIIDSILSLERLGATIHPVAIDISHPSAVTNLRSALTTLSLPPVAGVVHAAGILRDQLIEQITPDAFEAVLAPKIAGALALHTVFPPSSPDLDFFVLFSSCGQLLGFPGQASYASGNSFLDALARSRRKEGDNAISLLWTSWRGMGMGASSNGALEAELYARGITDVTPDEAFLAWSSISGTEGADHGVVLRARPLESGEPLPHAILRDIAPRKEKAVGEGNGENEEQRKKLSGKELAEYVLVVVKKCVSTTLSIPEDEVDETVALPEMGMDSVMTVNFRMSLQQTLTVSVGPTLVWKYPTVHHLVEYFCQVLDE</sequence>
<keyword id="KW-0489">Methyltransferase</keyword>
<keyword id="KW-0511">Multifunctional enzyme</keyword>
<keyword id="KW-0596">Phosphopantetheine</keyword>
<keyword id="KW-0597">Phosphoprotein</keyword>
<keyword id="KW-0808">Transferase</keyword>
<feature type="chain" id="PRO_0000454084" description="6-methylsalicylic acid synthase">
    <location>
        <begin position="1"/>
        <end position="1783"/>
    </location>
</feature>
<feature type="domain" description="Ketosynthase family 3 (KS3)" evidence="5">
    <location>
        <begin position="45"/>
        <end position="474"/>
    </location>
</feature>
<feature type="domain" description="PKS/mFAS DH" evidence="6">
    <location>
        <begin position="948"/>
        <end position="1216"/>
    </location>
</feature>
<feature type="domain" description="Carrier" evidence="4">
    <location>
        <begin position="1707"/>
        <end position="1781"/>
    </location>
</feature>
<feature type="region of interest" description="Disordered" evidence="8">
    <location>
        <begin position="1"/>
        <end position="40"/>
    </location>
</feature>
<feature type="region of interest" description="Malonyl-CoA:ACP transacylase (MAT) domain" evidence="3">
    <location>
        <begin position="587"/>
        <end position="884"/>
    </location>
</feature>
<feature type="region of interest" description="Product template (PT) domain" evidence="3">
    <location>
        <begin position="942"/>
        <end position="1215"/>
    </location>
</feature>
<feature type="region of interest" description="N-terminal hotdog fold" evidence="6">
    <location>
        <begin position="948"/>
        <end position="1064"/>
    </location>
</feature>
<feature type="region of interest" description="C-terminal hotdog fold" evidence="6">
    <location>
        <begin position="1078"/>
        <end position="1216"/>
    </location>
</feature>
<feature type="compositionally biased region" description="Polar residues" evidence="8">
    <location>
        <begin position="1"/>
        <end position="31"/>
    </location>
</feature>
<feature type="active site" description="For beta-ketoacyl synthase activity" evidence="5">
    <location>
        <position position="217"/>
    </location>
</feature>
<feature type="active site" description="For beta-ketoacyl synthase activity" evidence="5">
    <location>
        <position position="352"/>
    </location>
</feature>
<feature type="active site" description="For beta-ketoacyl synthase activity" evidence="5">
    <location>
        <position position="394"/>
    </location>
</feature>
<feature type="active site" description="For acyl/malonyl transferase activity" evidence="7">
    <location>
        <position position="673"/>
    </location>
</feature>
<feature type="active site" description="Proton acceptor; for dehydratase activity" evidence="6">
    <location>
        <position position="980"/>
    </location>
</feature>
<feature type="active site" description="Proton donor; for dehydratase activity" evidence="6">
    <location>
        <position position="1130"/>
    </location>
</feature>
<feature type="modified residue" description="O-(pantetheine 4'-phosphoryl)serine" evidence="4">
    <location>
        <position position="1741"/>
    </location>
</feature>
<reference key="1">
    <citation type="journal article" date="2017" name="Org. Lett.">
        <title>Late-stage terpene cyclization by an integral membrane cyclase in the biosynthesis of isoprenoid epoxycyclohexenone natural products.</title>
        <authorList>
            <person name="Tang M.C."/>
            <person name="Cui X."/>
            <person name="He X."/>
            <person name="Ding Z."/>
            <person name="Zhu T."/>
            <person name="Tang Y."/>
            <person name="Li D."/>
        </authorList>
    </citation>
    <scope>NUCLEOTIDE SEQUENCE [GENOMIC DNA]</scope>
    <scope>FUNCTION</scope>
    <scope>CATALYTIC ACTIVITY</scope>
    <scope>DISRUPTION PHENOTYPE</scope>
    <scope>PATHWAY</scope>
    <source>
        <strain>LM2</strain>
    </source>
</reference>
<accession>A0A2P1DP91</accession>
<evidence type="ECO:0000250" key="1">
    <source>
        <dbReference type="UniProtKB" id="G3Y419"/>
    </source>
</evidence>
<evidence type="ECO:0000250" key="2">
    <source>
        <dbReference type="UniProtKB" id="Q5B0D0"/>
    </source>
</evidence>
<evidence type="ECO:0000255" key="3"/>
<evidence type="ECO:0000255" key="4">
    <source>
        <dbReference type="PROSITE-ProRule" id="PRU00258"/>
    </source>
</evidence>
<evidence type="ECO:0000255" key="5">
    <source>
        <dbReference type="PROSITE-ProRule" id="PRU01348"/>
    </source>
</evidence>
<evidence type="ECO:0000255" key="6">
    <source>
        <dbReference type="PROSITE-ProRule" id="PRU01363"/>
    </source>
</evidence>
<evidence type="ECO:0000255" key="7">
    <source>
        <dbReference type="PROSITE-ProRule" id="PRU10022"/>
    </source>
</evidence>
<evidence type="ECO:0000256" key="8">
    <source>
        <dbReference type="SAM" id="MobiDB-lite"/>
    </source>
</evidence>
<evidence type="ECO:0000269" key="9">
    <source>
    </source>
</evidence>
<evidence type="ECO:0000303" key="10">
    <source>
    </source>
</evidence>
<comment type="function">
    <text evidence="1 9">Non-reducing polyketide synthase; part of the gene cluster that mediates the biosynthesis of macrophorins, isoprenoid epoxycyclohexenones containing cyclized drimane moieties (PubMed:28926261). The first step of the pathway is the synthesis of 6-methylsalicylic acid (6-MSA) by the polyketide synthase macA (PubMed:28926261). 6-MSA is then converted to m-cresol by the decarboxylase macB (By similarity). The cytochrome P450 monooxygenase macC then catalyzes the oxidation of m-cresol to toluquinol (By similarity). Epoxidation of toluquinol is then performed by the short chain dehydrogenase macD, with the help of macE, and a further prenylation by macG leads to 7-deacetoxyyanuthone A (By similarity). The next step is the hydroxylation of C-22 of 7-deacetoxyyanuthone A by the cytochrome P450 monooxygenase macH to yield 22-deacetylyanuthone A (By similarity). O-Mevalon transferase macI then attaches mevalon to the hydroxyl group of 22-deacetylyanuthone A to produce yanuthone E (By similarity). The terpene cyclase macJ catalyzes the cyclization of 22-deacetylyanuthone A to macrophorin A (PubMed:28926261). MacJ is also able to catalyze cyclization of yanuthone E and 7-deacetoxyyanuthone A to their corresponding macrophorins (PubMed:28926261). The macJ products can be further modified by macH and macJ, as well as by the FAD-dependent monooxygenase macF, to produce additional macrophorins, including 4'-oxomacrophorin A, 4'-oxomacrophorin D and 4'-oxomacrophorin E (PubMed:28926261).</text>
</comment>
<comment type="catalytic activity">
    <reaction evidence="9">
        <text>3 malonyl-CoA + acetyl-CoA + NADPH + 3 H(+) = 6-methylsalicylate + 3 CO2 + NADP(+) + 4 CoA + H2O</text>
        <dbReference type="Rhea" id="RHEA:12240"/>
        <dbReference type="ChEBI" id="CHEBI:15377"/>
        <dbReference type="ChEBI" id="CHEBI:15378"/>
        <dbReference type="ChEBI" id="CHEBI:16526"/>
        <dbReference type="ChEBI" id="CHEBI:36658"/>
        <dbReference type="ChEBI" id="CHEBI:57287"/>
        <dbReference type="ChEBI" id="CHEBI:57288"/>
        <dbReference type="ChEBI" id="CHEBI:57384"/>
        <dbReference type="ChEBI" id="CHEBI:57783"/>
        <dbReference type="ChEBI" id="CHEBI:58349"/>
        <dbReference type="EC" id="2.3.1.165"/>
    </reaction>
    <physiologicalReaction direction="left-to-right" evidence="9">
        <dbReference type="Rhea" id="RHEA:12241"/>
    </physiologicalReaction>
</comment>
<comment type="pathway">
    <text evidence="9">Secondary metabolite biosynthesis; terpenoid biosynthesis.</text>
</comment>
<comment type="domain">
    <text evidence="2">Multidomain protein; including a starter unit:ACP transacylase (SAT) that selects the starter unit; a ketosynthase (KS) that catalyzes repeated decarboxylative condensation to elongate the polyketide backbone; a malonyl-CoA:ACP transacylase (MAT) that selects and transfers the extender unit malonyl-CoA; a product template (PT) domain that controls the immediate cyclization regioselectivity of the reactive polyketide backbone; and an acyl-carrier protein (ACP) that serves as the tether of the growing and completed polyketide via its phosphopantetheinyl arm.</text>
</comment>
<comment type="disruption phenotype">
    <text evidence="9">Abolishes completely the production of macrophorin A, 4'-oxomacrophorin A, 4'-oxomacrophorin D and 4'-oxomacrophorin E.</text>
</comment>
<comment type="miscellaneous">
    <text evidence="9">The macrophorins cluster contains a single gene insertion (encoding for the terpene cyclase macJ) compared with the yanuthone cluster that produces the linear compound yanuthone.</text>
</comment>